<reference key="1">
    <citation type="journal article" date="2009" name="BMC Genomics">
        <title>The complete genome sequence of Staphylothermus marinus reveals differences in sulfur metabolism among heterotrophic Crenarchaeota.</title>
        <authorList>
            <person name="Anderson I.J."/>
            <person name="Dharmarajan L."/>
            <person name="Rodriguez J."/>
            <person name="Hooper S."/>
            <person name="Porat I."/>
            <person name="Ulrich L.E."/>
            <person name="Elkins J.G."/>
            <person name="Mavromatis K."/>
            <person name="Sun H."/>
            <person name="Land M."/>
            <person name="Lapidus A."/>
            <person name="Lucas S."/>
            <person name="Barry K."/>
            <person name="Huber H."/>
            <person name="Zhulin I.B."/>
            <person name="Whitman W.B."/>
            <person name="Mukhopadhyay B."/>
            <person name="Woese C."/>
            <person name="Bristow J."/>
            <person name="Kyrpides N."/>
        </authorList>
    </citation>
    <scope>NUCLEOTIDE SEQUENCE [LARGE SCALE GENOMIC DNA]</scope>
    <source>
        <strain>ATCC 43588 / DSM 3639 / JCM 9404 / F1</strain>
    </source>
</reference>
<reference key="2">
    <citation type="journal article" date="2009" name="Stand. Genomic Sci.">
        <title>Complete genome sequence of Staphylothermus marinus Stetter and Fiala 1986 type strain F1.</title>
        <authorList>
            <person name="Anderson I.J."/>
            <person name="Sun H."/>
            <person name="Lapidus A."/>
            <person name="Copeland A."/>
            <person name="Glavina Del Rio T."/>
            <person name="Tice H."/>
            <person name="Dalin E."/>
            <person name="Lucas S."/>
            <person name="Barry K."/>
            <person name="Land M."/>
            <person name="Richardson P."/>
            <person name="Huber H."/>
            <person name="Kyrpides N.C."/>
        </authorList>
    </citation>
    <scope>NUCLEOTIDE SEQUENCE [LARGE SCALE GENOMIC DNA]</scope>
    <source>
        <strain>ATCC 43588 / DSM 3639 / JCM 9404 / F1</strain>
    </source>
</reference>
<sequence>MPLRPARCYTHFSGPPYTRREYIPGVPQPKIVKFEMGNVHGDYDYRAELVMIEAGQIRHNALEAARVMANKYLSSTVGDQNYFLKIRVYPHHVLRENKMMAFAGADRLQDGMRQAFGKPIGTAARVYPGTIVMEVRVRKEHVEHAKEALRRAASKLPLPARIVFKPLKPGLKPI</sequence>
<keyword id="KW-1185">Reference proteome</keyword>
<keyword id="KW-0687">Ribonucleoprotein</keyword>
<keyword id="KW-0689">Ribosomal protein</keyword>
<evidence type="ECO:0000255" key="1">
    <source>
        <dbReference type="HAMAP-Rule" id="MF_00448"/>
    </source>
</evidence>
<evidence type="ECO:0000305" key="2"/>
<comment type="similarity">
    <text evidence="1">Belongs to the universal ribosomal protein uL16 family.</text>
</comment>
<gene>
    <name evidence="1" type="primary">rpl10e</name>
    <name type="ordered locus">Smar_0629</name>
</gene>
<name>RL10E_STAMF</name>
<dbReference type="EMBL" id="CP000575">
    <property type="protein sequence ID" value="ABN69736.1"/>
    <property type="molecule type" value="Genomic_DNA"/>
</dbReference>
<dbReference type="RefSeq" id="WP_011838927.1">
    <property type="nucleotide sequence ID" value="NC_009033.1"/>
</dbReference>
<dbReference type="SMR" id="A3DM76"/>
<dbReference type="STRING" id="399550.Smar_0629"/>
<dbReference type="GeneID" id="4906607"/>
<dbReference type="KEGG" id="smr:Smar_0629"/>
<dbReference type="eggNOG" id="arCOG04113">
    <property type="taxonomic scope" value="Archaea"/>
</dbReference>
<dbReference type="HOGENOM" id="CLU_084051_0_2_2"/>
<dbReference type="OrthoDB" id="30538at2157"/>
<dbReference type="Proteomes" id="UP000000254">
    <property type="component" value="Chromosome"/>
</dbReference>
<dbReference type="GO" id="GO:1990904">
    <property type="term" value="C:ribonucleoprotein complex"/>
    <property type="evidence" value="ECO:0007669"/>
    <property type="project" value="UniProtKB-KW"/>
</dbReference>
<dbReference type="GO" id="GO:0005840">
    <property type="term" value="C:ribosome"/>
    <property type="evidence" value="ECO:0007669"/>
    <property type="project" value="UniProtKB-KW"/>
</dbReference>
<dbReference type="GO" id="GO:0003735">
    <property type="term" value="F:structural constituent of ribosome"/>
    <property type="evidence" value="ECO:0007669"/>
    <property type="project" value="InterPro"/>
</dbReference>
<dbReference type="GO" id="GO:0006412">
    <property type="term" value="P:translation"/>
    <property type="evidence" value="ECO:0007669"/>
    <property type="project" value="UniProtKB-UniRule"/>
</dbReference>
<dbReference type="CDD" id="cd01433">
    <property type="entry name" value="Ribosomal_L16_L10e"/>
    <property type="match status" value="1"/>
</dbReference>
<dbReference type="FunFam" id="3.90.1170.10:FF:000008">
    <property type="entry name" value="50S ribosomal protein L10e"/>
    <property type="match status" value="1"/>
</dbReference>
<dbReference type="Gene3D" id="3.90.1170.10">
    <property type="entry name" value="Ribosomal protein L10e/L16"/>
    <property type="match status" value="1"/>
</dbReference>
<dbReference type="HAMAP" id="MF_00448">
    <property type="entry name" value="Ribosomal_uL16_arch"/>
    <property type="match status" value="1"/>
</dbReference>
<dbReference type="InterPro" id="IPR047873">
    <property type="entry name" value="Ribosomal_uL16"/>
</dbReference>
<dbReference type="InterPro" id="IPR022981">
    <property type="entry name" value="Ribosomal_uL16_arc"/>
</dbReference>
<dbReference type="InterPro" id="IPR018255">
    <property type="entry name" value="Ribosomal_uL16_CS_euk_arc"/>
</dbReference>
<dbReference type="InterPro" id="IPR016180">
    <property type="entry name" value="Ribosomal_uL16_dom"/>
</dbReference>
<dbReference type="InterPro" id="IPR001197">
    <property type="entry name" value="Ribosomal_uL16_euk_arch"/>
</dbReference>
<dbReference type="InterPro" id="IPR036920">
    <property type="entry name" value="Ribosomal_uL16_sf"/>
</dbReference>
<dbReference type="NCBIfam" id="NF003236">
    <property type="entry name" value="PRK04199.1-1"/>
    <property type="match status" value="1"/>
</dbReference>
<dbReference type="NCBIfam" id="NF003239">
    <property type="entry name" value="PRK04199.1-4"/>
    <property type="match status" value="1"/>
</dbReference>
<dbReference type="NCBIfam" id="TIGR00279">
    <property type="entry name" value="uL16_euk_arch"/>
    <property type="match status" value="1"/>
</dbReference>
<dbReference type="PANTHER" id="PTHR11726">
    <property type="entry name" value="60S RIBOSOMAL PROTEIN L10"/>
    <property type="match status" value="1"/>
</dbReference>
<dbReference type="Pfam" id="PF00252">
    <property type="entry name" value="Ribosomal_L16"/>
    <property type="match status" value="1"/>
</dbReference>
<dbReference type="PIRSF" id="PIRSF005590">
    <property type="entry name" value="Ribosomal_L10"/>
    <property type="match status" value="1"/>
</dbReference>
<dbReference type="SUPFAM" id="SSF54686">
    <property type="entry name" value="Ribosomal protein L16p/L10e"/>
    <property type="match status" value="1"/>
</dbReference>
<dbReference type="PROSITE" id="PS01257">
    <property type="entry name" value="RIBOSOMAL_L10E"/>
    <property type="match status" value="1"/>
</dbReference>
<proteinExistence type="inferred from homology"/>
<accession>A3DM76</accession>
<protein>
    <recommendedName>
        <fullName evidence="1">Large ribosomal subunit protein uL16</fullName>
    </recommendedName>
    <alternativeName>
        <fullName evidence="2">50S ribosomal protein L10e</fullName>
    </alternativeName>
</protein>
<organism>
    <name type="scientific">Staphylothermus marinus (strain ATCC 43588 / DSM 3639 / JCM 9404 / F1)</name>
    <dbReference type="NCBI Taxonomy" id="399550"/>
    <lineage>
        <taxon>Archaea</taxon>
        <taxon>Thermoproteota</taxon>
        <taxon>Thermoprotei</taxon>
        <taxon>Desulfurococcales</taxon>
        <taxon>Desulfurococcaceae</taxon>
        <taxon>Staphylothermus</taxon>
    </lineage>
</organism>
<feature type="chain" id="PRO_1000026197" description="Large ribosomal subunit protein uL16">
    <location>
        <begin position="1"/>
        <end position="174"/>
    </location>
</feature>